<accession>Q9D384</accession>
<accession>Q8CAC7</accession>
<organism>
    <name type="scientific">Mus musculus</name>
    <name type="common">Mouse</name>
    <dbReference type="NCBI Taxonomy" id="10090"/>
    <lineage>
        <taxon>Eukaryota</taxon>
        <taxon>Metazoa</taxon>
        <taxon>Chordata</taxon>
        <taxon>Craniata</taxon>
        <taxon>Vertebrata</taxon>
        <taxon>Euteleostomi</taxon>
        <taxon>Mammalia</taxon>
        <taxon>Eutheria</taxon>
        <taxon>Euarchontoglires</taxon>
        <taxon>Glires</taxon>
        <taxon>Rodentia</taxon>
        <taxon>Myomorpha</taxon>
        <taxon>Muroidea</taxon>
        <taxon>Muridae</taxon>
        <taxon>Murinae</taxon>
        <taxon>Mus</taxon>
        <taxon>Mus</taxon>
    </lineage>
</organism>
<evidence type="ECO:0000250" key="1"/>
<evidence type="ECO:0000250" key="2">
    <source>
        <dbReference type="UniProtKB" id="Q16560"/>
    </source>
</evidence>
<evidence type="ECO:0000255" key="3">
    <source>
        <dbReference type="PROSITE-ProRule" id="PRU00176"/>
    </source>
</evidence>
<evidence type="ECO:0000256" key="4">
    <source>
        <dbReference type="SAM" id="MobiDB-lite"/>
    </source>
</evidence>
<dbReference type="EMBL" id="AK018232">
    <property type="protein sequence ID" value="BAB31127.1"/>
    <property type="molecule type" value="mRNA"/>
</dbReference>
<dbReference type="EMBL" id="AK039064">
    <property type="protein sequence ID" value="BAC30228.1"/>
    <property type="molecule type" value="mRNA"/>
</dbReference>
<dbReference type="EMBL" id="BC043031">
    <property type="protein sequence ID" value="AAH43031.1"/>
    <property type="molecule type" value="mRNA"/>
</dbReference>
<dbReference type="EMBL" id="BC058361">
    <property type="protein sequence ID" value="AAH58361.1"/>
    <property type="molecule type" value="mRNA"/>
</dbReference>
<dbReference type="CCDS" id="CCDS19677.1"/>
<dbReference type="RefSeq" id="NP_083808.1">
    <property type="nucleotide sequence ID" value="NM_029532.2"/>
</dbReference>
<dbReference type="RefSeq" id="XP_006530557.1">
    <property type="nucleotide sequence ID" value="XM_006530494.5"/>
</dbReference>
<dbReference type="RefSeq" id="XP_006530558.1">
    <property type="nucleotide sequence ID" value="XM_006530495.5"/>
</dbReference>
<dbReference type="SMR" id="Q9D384"/>
<dbReference type="BioGRID" id="218001">
    <property type="interactions" value="4"/>
</dbReference>
<dbReference type="FunCoup" id="Q9D384">
    <property type="interactions" value="2132"/>
</dbReference>
<dbReference type="STRING" id="10090.ENSMUSP00000107080"/>
<dbReference type="PhosphoSitePlus" id="Q9D384"/>
<dbReference type="PaxDb" id="10090-ENSMUSP00000031349"/>
<dbReference type="PeptideAtlas" id="Q9D384"/>
<dbReference type="ProteomicsDB" id="298248"/>
<dbReference type="Pumba" id="Q9D384"/>
<dbReference type="Antibodypedia" id="31812">
    <property type="antibodies" value="54 antibodies from 18 providers"/>
</dbReference>
<dbReference type="DNASU" id="76167"/>
<dbReference type="Ensembl" id="ENSMUST00000031349.9">
    <property type="protein sequence ID" value="ENSMUSP00000031349.9"/>
    <property type="gene ID" value="ENSMUSG00000029402.9"/>
</dbReference>
<dbReference type="Ensembl" id="ENSMUST00000111453.2">
    <property type="protein sequence ID" value="ENSMUSP00000107080.2"/>
    <property type="gene ID" value="ENSMUSG00000029402.9"/>
</dbReference>
<dbReference type="GeneID" id="76167"/>
<dbReference type="KEGG" id="mmu:76167"/>
<dbReference type="UCSC" id="uc008zpy.1">
    <property type="organism name" value="mouse"/>
</dbReference>
<dbReference type="AGR" id="MGI:1923417"/>
<dbReference type="CTD" id="11066"/>
<dbReference type="MGI" id="MGI:1923417">
    <property type="gene designation" value="Snrnp35"/>
</dbReference>
<dbReference type="VEuPathDB" id="HostDB:ENSMUSG00000029402"/>
<dbReference type="eggNOG" id="KOG0113">
    <property type="taxonomic scope" value="Eukaryota"/>
</dbReference>
<dbReference type="GeneTree" id="ENSGT00940000157648"/>
<dbReference type="HOGENOM" id="CLU_035088_1_0_1"/>
<dbReference type="InParanoid" id="Q9D384"/>
<dbReference type="OMA" id="FERSRVM"/>
<dbReference type="OrthoDB" id="6159137at2759"/>
<dbReference type="PhylomeDB" id="Q9D384"/>
<dbReference type="TreeFam" id="TF331614"/>
<dbReference type="Reactome" id="R-MMU-72165">
    <property type="pathway name" value="mRNA Splicing - Minor Pathway"/>
</dbReference>
<dbReference type="BioGRID-ORCS" id="76167">
    <property type="hits" value="24 hits in 78 CRISPR screens"/>
</dbReference>
<dbReference type="ChiTaRS" id="Snrnp35">
    <property type="organism name" value="mouse"/>
</dbReference>
<dbReference type="PRO" id="PR:Q9D384"/>
<dbReference type="Proteomes" id="UP000000589">
    <property type="component" value="Chromosome 5"/>
</dbReference>
<dbReference type="RNAct" id="Q9D384">
    <property type="molecule type" value="protein"/>
</dbReference>
<dbReference type="Bgee" id="ENSMUSG00000029402">
    <property type="expression patterns" value="Expressed in embryonic brain and 223 other cell types or tissues"/>
</dbReference>
<dbReference type="ExpressionAtlas" id="Q9D384">
    <property type="expression patterns" value="baseline and differential"/>
</dbReference>
<dbReference type="GO" id="GO:0005730">
    <property type="term" value="C:nucleolus"/>
    <property type="evidence" value="ECO:0007669"/>
    <property type="project" value="Ensembl"/>
</dbReference>
<dbReference type="GO" id="GO:0005634">
    <property type="term" value="C:nucleus"/>
    <property type="evidence" value="ECO:0000250"/>
    <property type="project" value="MGI"/>
</dbReference>
<dbReference type="GO" id="GO:0005689">
    <property type="term" value="C:U12-type spliceosomal complex"/>
    <property type="evidence" value="ECO:0000250"/>
    <property type="project" value="HGNC-UCL"/>
</dbReference>
<dbReference type="GO" id="GO:0003723">
    <property type="term" value="F:RNA binding"/>
    <property type="evidence" value="ECO:0007669"/>
    <property type="project" value="UniProtKB-KW"/>
</dbReference>
<dbReference type="GO" id="GO:0006397">
    <property type="term" value="P:mRNA processing"/>
    <property type="evidence" value="ECO:0007669"/>
    <property type="project" value="UniProtKB-KW"/>
</dbReference>
<dbReference type="GO" id="GO:0008380">
    <property type="term" value="P:RNA splicing"/>
    <property type="evidence" value="ECO:0007669"/>
    <property type="project" value="UniProtKB-KW"/>
</dbReference>
<dbReference type="CDD" id="cd12237">
    <property type="entry name" value="RRM_snRNP35"/>
    <property type="match status" value="1"/>
</dbReference>
<dbReference type="FunFam" id="3.30.70.330:FF:000132">
    <property type="entry name" value="Small nuclear ribonucleoprotein U11/U12 subunit 35"/>
    <property type="match status" value="1"/>
</dbReference>
<dbReference type="Gene3D" id="3.30.70.330">
    <property type="match status" value="1"/>
</dbReference>
<dbReference type="InterPro" id="IPR012677">
    <property type="entry name" value="Nucleotide-bd_a/b_plait_sf"/>
</dbReference>
<dbReference type="InterPro" id="IPR035979">
    <property type="entry name" value="RBD_domain_sf"/>
</dbReference>
<dbReference type="InterPro" id="IPR000504">
    <property type="entry name" value="RRM_dom"/>
</dbReference>
<dbReference type="InterPro" id="IPR034146">
    <property type="entry name" value="snRNP35_RRM"/>
</dbReference>
<dbReference type="InterPro" id="IPR051183">
    <property type="entry name" value="U1_U11-U12_snRNP_70-35kDa"/>
</dbReference>
<dbReference type="PANTHER" id="PTHR13952">
    <property type="entry name" value="U1 SMALL NUCLEAR RIBONUCLEOPROTEIN 70 KD"/>
    <property type="match status" value="1"/>
</dbReference>
<dbReference type="PANTHER" id="PTHR13952:SF6">
    <property type="entry name" value="U11_U12 SMALL NUCLEAR RIBONUCLEOPROTEIN 35 KDA PROTEIN"/>
    <property type="match status" value="1"/>
</dbReference>
<dbReference type="Pfam" id="PF00076">
    <property type="entry name" value="RRM_1"/>
    <property type="match status" value="1"/>
</dbReference>
<dbReference type="SMART" id="SM00360">
    <property type="entry name" value="RRM"/>
    <property type="match status" value="1"/>
</dbReference>
<dbReference type="SUPFAM" id="SSF54928">
    <property type="entry name" value="RNA-binding domain, RBD"/>
    <property type="match status" value="1"/>
</dbReference>
<dbReference type="PROSITE" id="PS50102">
    <property type="entry name" value="RRM"/>
    <property type="match status" value="1"/>
</dbReference>
<feature type="chain" id="PRO_0000307908" description="U11/U12 small nuclear ribonucleoprotein 35 kDa protein">
    <location>
        <begin position="1"/>
        <end position="244"/>
    </location>
</feature>
<feature type="domain" description="RRM" evidence="3">
    <location>
        <begin position="51"/>
        <end position="129"/>
    </location>
</feature>
<feature type="region of interest" description="Disordered" evidence="4">
    <location>
        <begin position="146"/>
        <end position="244"/>
    </location>
</feature>
<feature type="compositionally biased region" description="Basic and acidic residues" evidence="4">
    <location>
        <begin position="146"/>
        <end position="162"/>
    </location>
</feature>
<feature type="compositionally biased region" description="Basic and acidic residues" evidence="4">
    <location>
        <begin position="173"/>
        <end position="185"/>
    </location>
</feature>
<feature type="compositionally biased region" description="Basic and acidic residues" evidence="4">
    <location>
        <begin position="192"/>
        <end position="244"/>
    </location>
</feature>
<feature type="cross-link" description="Glycyl lysine isopeptide (Lys-Gly) (interchain with G-Cter in SUMO2)" evidence="2">
    <location>
        <position position="172"/>
    </location>
</feature>
<comment type="subunit">
    <text evidence="1">Component of the U11/U12 snRNPs that are part of the U12-type spliceosome.</text>
</comment>
<comment type="subcellular location">
    <subcellularLocation>
        <location evidence="1">Nucleus</location>
    </subcellularLocation>
</comment>
<sequence length="244" mass="29290">MSDWMPIAKEYDPLKAGSIDGTDEDPHDRAVWRAMLARYVPNKGVTGDPLLTLFVARLNLQTKEEKLKEVFSRYGDIRRLRLVRDLVTGFSKGYAFIEYKEERALMKAYRDADGLVIDQHEIFVDYELERTLRGWIPRRLGGGLGGKKESGQLRFGGRDRPFRKPINLPVVKNEPHREGKRERRERSRSRDRHWDPRPRERDHDRGREKHWQERARVWPENDWEREREFREERVKSRDKRDRSK</sequence>
<reference key="1">
    <citation type="journal article" date="2005" name="Science">
        <title>The transcriptional landscape of the mammalian genome.</title>
        <authorList>
            <person name="Carninci P."/>
            <person name="Kasukawa T."/>
            <person name="Katayama S."/>
            <person name="Gough J."/>
            <person name="Frith M.C."/>
            <person name="Maeda N."/>
            <person name="Oyama R."/>
            <person name="Ravasi T."/>
            <person name="Lenhard B."/>
            <person name="Wells C."/>
            <person name="Kodzius R."/>
            <person name="Shimokawa K."/>
            <person name="Bajic V.B."/>
            <person name="Brenner S.E."/>
            <person name="Batalov S."/>
            <person name="Forrest A.R."/>
            <person name="Zavolan M."/>
            <person name="Davis M.J."/>
            <person name="Wilming L.G."/>
            <person name="Aidinis V."/>
            <person name="Allen J.E."/>
            <person name="Ambesi-Impiombato A."/>
            <person name="Apweiler R."/>
            <person name="Aturaliya R.N."/>
            <person name="Bailey T.L."/>
            <person name="Bansal M."/>
            <person name="Baxter L."/>
            <person name="Beisel K.W."/>
            <person name="Bersano T."/>
            <person name="Bono H."/>
            <person name="Chalk A.M."/>
            <person name="Chiu K.P."/>
            <person name="Choudhary V."/>
            <person name="Christoffels A."/>
            <person name="Clutterbuck D.R."/>
            <person name="Crowe M.L."/>
            <person name="Dalla E."/>
            <person name="Dalrymple B.P."/>
            <person name="de Bono B."/>
            <person name="Della Gatta G."/>
            <person name="di Bernardo D."/>
            <person name="Down T."/>
            <person name="Engstrom P."/>
            <person name="Fagiolini M."/>
            <person name="Faulkner G."/>
            <person name="Fletcher C.F."/>
            <person name="Fukushima T."/>
            <person name="Furuno M."/>
            <person name="Futaki S."/>
            <person name="Gariboldi M."/>
            <person name="Georgii-Hemming P."/>
            <person name="Gingeras T.R."/>
            <person name="Gojobori T."/>
            <person name="Green R.E."/>
            <person name="Gustincich S."/>
            <person name="Harbers M."/>
            <person name="Hayashi Y."/>
            <person name="Hensch T.K."/>
            <person name="Hirokawa N."/>
            <person name="Hill D."/>
            <person name="Huminiecki L."/>
            <person name="Iacono M."/>
            <person name="Ikeo K."/>
            <person name="Iwama A."/>
            <person name="Ishikawa T."/>
            <person name="Jakt M."/>
            <person name="Kanapin A."/>
            <person name="Katoh M."/>
            <person name="Kawasawa Y."/>
            <person name="Kelso J."/>
            <person name="Kitamura H."/>
            <person name="Kitano H."/>
            <person name="Kollias G."/>
            <person name="Krishnan S.P."/>
            <person name="Kruger A."/>
            <person name="Kummerfeld S.K."/>
            <person name="Kurochkin I.V."/>
            <person name="Lareau L.F."/>
            <person name="Lazarevic D."/>
            <person name="Lipovich L."/>
            <person name="Liu J."/>
            <person name="Liuni S."/>
            <person name="McWilliam S."/>
            <person name="Madan Babu M."/>
            <person name="Madera M."/>
            <person name="Marchionni L."/>
            <person name="Matsuda H."/>
            <person name="Matsuzawa S."/>
            <person name="Miki H."/>
            <person name="Mignone F."/>
            <person name="Miyake S."/>
            <person name="Morris K."/>
            <person name="Mottagui-Tabar S."/>
            <person name="Mulder N."/>
            <person name="Nakano N."/>
            <person name="Nakauchi H."/>
            <person name="Ng P."/>
            <person name="Nilsson R."/>
            <person name="Nishiguchi S."/>
            <person name="Nishikawa S."/>
            <person name="Nori F."/>
            <person name="Ohara O."/>
            <person name="Okazaki Y."/>
            <person name="Orlando V."/>
            <person name="Pang K.C."/>
            <person name="Pavan W.J."/>
            <person name="Pavesi G."/>
            <person name="Pesole G."/>
            <person name="Petrovsky N."/>
            <person name="Piazza S."/>
            <person name="Reed J."/>
            <person name="Reid J.F."/>
            <person name="Ring B.Z."/>
            <person name="Ringwald M."/>
            <person name="Rost B."/>
            <person name="Ruan Y."/>
            <person name="Salzberg S.L."/>
            <person name="Sandelin A."/>
            <person name="Schneider C."/>
            <person name="Schoenbach C."/>
            <person name="Sekiguchi K."/>
            <person name="Semple C.A."/>
            <person name="Seno S."/>
            <person name="Sessa L."/>
            <person name="Sheng Y."/>
            <person name="Shibata Y."/>
            <person name="Shimada H."/>
            <person name="Shimada K."/>
            <person name="Silva D."/>
            <person name="Sinclair B."/>
            <person name="Sperling S."/>
            <person name="Stupka E."/>
            <person name="Sugiura K."/>
            <person name="Sultana R."/>
            <person name="Takenaka Y."/>
            <person name="Taki K."/>
            <person name="Tammoja K."/>
            <person name="Tan S.L."/>
            <person name="Tang S."/>
            <person name="Taylor M.S."/>
            <person name="Tegner J."/>
            <person name="Teichmann S.A."/>
            <person name="Ueda H.R."/>
            <person name="van Nimwegen E."/>
            <person name="Verardo R."/>
            <person name="Wei C.L."/>
            <person name="Yagi K."/>
            <person name="Yamanishi H."/>
            <person name="Zabarovsky E."/>
            <person name="Zhu S."/>
            <person name="Zimmer A."/>
            <person name="Hide W."/>
            <person name="Bult C."/>
            <person name="Grimmond S.M."/>
            <person name="Teasdale R.D."/>
            <person name="Liu E.T."/>
            <person name="Brusic V."/>
            <person name="Quackenbush J."/>
            <person name="Wahlestedt C."/>
            <person name="Mattick J.S."/>
            <person name="Hume D.A."/>
            <person name="Kai C."/>
            <person name="Sasaki D."/>
            <person name="Tomaru Y."/>
            <person name="Fukuda S."/>
            <person name="Kanamori-Katayama M."/>
            <person name="Suzuki M."/>
            <person name="Aoki J."/>
            <person name="Arakawa T."/>
            <person name="Iida J."/>
            <person name="Imamura K."/>
            <person name="Itoh M."/>
            <person name="Kato T."/>
            <person name="Kawaji H."/>
            <person name="Kawagashira N."/>
            <person name="Kawashima T."/>
            <person name="Kojima M."/>
            <person name="Kondo S."/>
            <person name="Konno H."/>
            <person name="Nakano K."/>
            <person name="Ninomiya N."/>
            <person name="Nishio T."/>
            <person name="Okada M."/>
            <person name="Plessy C."/>
            <person name="Shibata K."/>
            <person name="Shiraki T."/>
            <person name="Suzuki S."/>
            <person name="Tagami M."/>
            <person name="Waki K."/>
            <person name="Watahiki A."/>
            <person name="Okamura-Oho Y."/>
            <person name="Suzuki H."/>
            <person name="Kawai J."/>
            <person name="Hayashizaki Y."/>
        </authorList>
    </citation>
    <scope>NUCLEOTIDE SEQUENCE [LARGE SCALE MRNA]</scope>
    <source>
        <strain>C57BL/6J</strain>
        <tissue>Hypothalamus</tissue>
        <tissue>Medulla oblongata</tissue>
    </source>
</reference>
<reference key="2">
    <citation type="journal article" date="2004" name="Genome Res.">
        <title>The status, quality, and expansion of the NIH full-length cDNA project: the Mammalian Gene Collection (MGC).</title>
        <authorList>
            <consortium name="The MGC Project Team"/>
        </authorList>
    </citation>
    <scope>NUCLEOTIDE SEQUENCE [LARGE SCALE MRNA]</scope>
    <source>
        <strain>C57BL/6J</strain>
        <tissue>Brain</tissue>
    </source>
</reference>
<name>U1SBP_MOUSE</name>
<keyword id="KW-1017">Isopeptide bond</keyword>
<keyword id="KW-0507">mRNA processing</keyword>
<keyword id="KW-0508">mRNA splicing</keyword>
<keyword id="KW-0539">Nucleus</keyword>
<keyword id="KW-1185">Reference proteome</keyword>
<keyword id="KW-0694">RNA-binding</keyword>
<keyword id="KW-0747">Spliceosome</keyword>
<keyword id="KW-0832">Ubl conjugation</keyword>
<proteinExistence type="evidence at transcript level"/>
<gene>
    <name type="primary">Snrnp35</name>
    <name type="synonym">U1snrnpbp</name>
</gene>
<protein>
    <recommendedName>
        <fullName>U11/U12 small nuclear ribonucleoprotein 35 kDa protein</fullName>
        <shortName>U11/U12 snRNP 35 kDa protein</shortName>
    </recommendedName>
    <alternativeName>
        <fullName>U1 snRNP-binding protein homolog</fullName>
    </alternativeName>
</protein>